<protein>
    <recommendedName>
        <fullName evidence="1">Orotidine 5'-phosphate decarboxylase</fullName>
        <ecNumber evidence="1">4.1.1.23</ecNumber>
    </recommendedName>
    <alternativeName>
        <fullName evidence="1">OMP decarboxylase</fullName>
        <shortName evidence="1">OMPDCase</shortName>
        <shortName evidence="1">OMPdecase</shortName>
    </alternativeName>
</protein>
<accession>Q1QVK2</accession>
<keyword id="KW-0210">Decarboxylase</keyword>
<keyword id="KW-0456">Lyase</keyword>
<keyword id="KW-0665">Pyrimidine biosynthesis</keyword>
<keyword id="KW-1185">Reference proteome</keyword>
<reference key="1">
    <citation type="journal article" date="2011" name="Stand. Genomic Sci.">
        <title>Complete genome sequence of the halophilic and highly halotolerant Chromohalobacter salexigens type strain (1H11(T)).</title>
        <authorList>
            <person name="Copeland A."/>
            <person name="O'Connor K."/>
            <person name="Lucas S."/>
            <person name="Lapidus A."/>
            <person name="Berry K.W."/>
            <person name="Detter J.C."/>
            <person name="Del Rio T.G."/>
            <person name="Hammon N."/>
            <person name="Dalin E."/>
            <person name="Tice H."/>
            <person name="Pitluck S."/>
            <person name="Bruce D."/>
            <person name="Goodwin L."/>
            <person name="Han C."/>
            <person name="Tapia R."/>
            <person name="Saunders E."/>
            <person name="Schmutz J."/>
            <person name="Brettin T."/>
            <person name="Larimer F."/>
            <person name="Land M."/>
            <person name="Hauser L."/>
            <person name="Vargas C."/>
            <person name="Nieto J.J."/>
            <person name="Kyrpides N.C."/>
            <person name="Ivanova N."/>
            <person name="Goker M."/>
            <person name="Klenk H.P."/>
            <person name="Csonka L.N."/>
            <person name="Woyke T."/>
        </authorList>
    </citation>
    <scope>NUCLEOTIDE SEQUENCE [LARGE SCALE GENOMIC DNA]</scope>
    <source>
        <strain>ATCC BAA-138 / DSM 3043 / CIP 106854 / NCIMB 13768 / 1H11</strain>
    </source>
</reference>
<organism>
    <name type="scientific">Chromohalobacter salexigens (strain ATCC BAA-138 / DSM 3043 / CIP 106854 / NCIMB 13768 / 1H11)</name>
    <dbReference type="NCBI Taxonomy" id="290398"/>
    <lineage>
        <taxon>Bacteria</taxon>
        <taxon>Pseudomonadati</taxon>
        <taxon>Pseudomonadota</taxon>
        <taxon>Gammaproteobacteria</taxon>
        <taxon>Oceanospirillales</taxon>
        <taxon>Halomonadaceae</taxon>
        <taxon>Chromohalobacter</taxon>
    </lineage>
</organism>
<name>PYRF_CHRSD</name>
<dbReference type="EC" id="4.1.1.23" evidence="1"/>
<dbReference type="EMBL" id="CP000285">
    <property type="protein sequence ID" value="ABE59506.1"/>
    <property type="molecule type" value="Genomic_DNA"/>
</dbReference>
<dbReference type="RefSeq" id="WP_011507452.1">
    <property type="nucleotide sequence ID" value="NC_007963.1"/>
</dbReference>
<dbReference type="SMR" id="Q1QVK2"/>
<dbReference type="STRING" id="290398.Csal_2155"/>
<dbReference type="GeneID" id="95334874"/>
<dbReference type="KEGG" id="csa:Csal_2155"/>
<dbReference type="eggNOG" id="COG0284">
    <property type="taxonomic scope" value="Bacteria"/>
</dbReference>
<dbReference type="HOGENOM" id="CLU_067069_0_0_6"/>
<dbReference type="OrthoDB" id="9806203at2"/>
<dbReference type="UniPathway" id="UPA00070">
    <property type="reaction ID" value="UER00120"/>
</dbReference>
<dbReference type="Proteomes" id="UP000000239">
    <property type="component" value="Chromosome"/>
</dbReference>
<dbReference type="GO" id="GO:0005829">
    <property type="term" value="C:cytosol"/>
    <property type="evidence" value="ECO:0007669"/>
    <property type="project" value="TreeGrafter"/>
</dbReference>
<dbReference type="GO" id="GO:0004590">
    <property type="term" value="F:orotidine-5'-phosphate decarboxylase activity"/>
    <property type="evidence" value="ECO:0007669"/>
    <property type="project" value="UniProtKB-UniRule"/>
</dbReference>
<dbReference type="GO" id="GO:0006207">
    <property type="term" value="P:'de novo' pyrimidine nucleobase biosynthetic process"/>
    <property type="evidence" value="ECO:0007669"/>
    <property type="project" value="InterPro"/>
</dbReference>
<dbReference type="GO" id="GO:0044205">
    <property type="term" value="P:'de novo' UMP biosynthetic process"/>
    <property type="evidence" value="ECO:0007669"/>
    <property type="project" value="UniProtKB-UniRule"/>
</dbReference>
<dbReference type="CDD" id="cd04725">
    <property type="entry name" value="OMP_decarboxylase_like"/>
    <property type="match status" value="1"/>
</dbReference>
<dbReference type="FunFam" id="3.20.20.70:FF:000015">
    <property type="entry name" value="Orotidine 5'-phosphate decarboxylase"/>
    <property type="match status" value="1"/>
</dbReference>
<dbReference type="Gene3D" id="3.20.20.70">
    <property type="entry name" value="Aldolase class I"/>
    <property type="match status" value="1"/>
</dbReference>
<dbReference type="HAMAP" id="MF_01200_B">
    <property type="entry name" value="OMPdecase_type1_B"/>
    <property type="match status" value="1"/>
</dbReference>
<dbReference type="InterPro" id="IPR013785">
    <property type="entry name" value="Aldolase_TIM"/>
</dbReference>
<dbReference type="InterPro" id="IPR014732">
    <property type="entry name" value="OMPdecase"/>
</dbReference>
<dbReference type="InterPro" id="IPR018089">
    <property type="entry name" value="OMPdecase_AS"/>
</dbReference>
<dbReference type="InterPro" id="IPR047596">
    <property type="entry name" value="OMPdecase_bac"/>
</dbReference>
<dbReference type="InterPro" id="IPR001754">
    <property type="entry name" value="OMPdeCOase_dom"/>
</dbReference>
<dbReference type="InterPro" id="IPR011060">
    <property type="entry name" value="RibuloseP-bd_barrel"/>
</dbReference>
<dbReference type="NCBIfam" id="NF001273">
    <property type="entry name" value="PRK00230.1"/>
    <property type="match status" value="1"/>
</dbReference>
<dbReference type="NCBIfam" id="TIGR01740">
    <property type="entry name" value="pyrF"/>
    <property type="match status" value="1"/>
</dbReference>
<dbReference type="PANTHER" id="PTHR32119">
    <property type="entry name" value="OROTIDINE 5'-PHOSPHATE DECARBOXYLASE"/>
    <property type="match status" value="1"/>
</dbReference>
<dbReference type="PANTHER" id="PTHR32119:SF2">
    <property type="entry name" value="OROTIDINE 5'-PHOSPHATE DECARBOXYLASE"/>
    <property type="match status" value="1"/>
</dbReference>
<dbReference type="Pfam" id="PF00215">
    <property type="entry name" value="OMPdecase"/>
    <property type="match status" value="1"/>
</dbReference>
<dbReference type="SMART" id="SM00934">
    <property type="entry name" value="OMPdecase"/>
    <property type="match status" value="1"/>
</dbReference>
<dbReference type="SUPFAM" id="SSF51366">
    <property type="entry name" value="Ribulose-phoshate binding barrel"/>
    <property type="match status" value="1"/>
</dbReference>
<dbReference type="PROSITE" id="PS00156">
    <property type="entry name" value="OMPDECASE"/>
    <property type="match status" value="1"/>
</dbReference>
<comment type="function">
    <text evidence="1">Catalyzes the decarboxylation of orotidine 5'-monophosphate (OMP) to uridine 5'-monophosphate (UMP).</text>
</comment>
<comment type="catalytic activity">
    <reaction evidence="1">
        <text>orotidine 5'-phosphate + H(+) = UMP + CO2</text>
        <dbReference type="Rhea" id="RHEA:11596"/>
        <dbReference type="ChEBI" id="CHEBI:15378"/>
        <dbReference type="ChEBI" id="CHEBI:16526"/>
        <dbReference type="ChEBI" id="CHEBI:57538"/>
        <dbReference type="ChEBI" id="CHEBI:57865"/>
        <dbReference type="EC" id="4.1.1.23"/>
    </reaction>
</comment>
<comment type="pathway">
    <text evidence="1">Pyrimidine metabolism; UMP biosynthesis via de novo pathway; UMP from orotate: step 2/2.</text>
</comment>
<comment type="subunit">
    <text evidence="1">Homodimer.</text>
</comment>
<comment type="similarity">
    <text evidence="1">Belongs to the OMP decarboxylase family. Type 1 subfamily.</text>
</comment>
<proteinExistence type="inferred from homology"/>
<sequence>MSPDLDTPLIIALDYPRLDQALAMAERLDPSRCRVKVGKELFTRTGPRVLEALHGLGFEVFLDLKFHDIPNTVAGAVEAAADHGVWMVNVHAGGGRRMMEAARERLERRRLGTHLIAVTVLTSMERDDLIEVGVEAEPLSQVERLARLAQQSGMAGVVCSAQEAAALRATCGDDFLKVTPGIRPRASSADDQRRTLTPGEAMAAGSTHLVVGRPVTQAPDPMAALATIERELAEPS</sequence>
<evidence type="ECO:0000255" key="1">
    <source>
        <dbReference type="HAMAP-Rule" id="MF_01200"/>
    </source>
</evidence>
<feature type="chain" id="PRO_1000073088" description="Orotidine 5'-phosphate decarboxylase">
    <location>
        <begin position="1"/>
        <end position="236"/>
    </location>
</feature>
<feature type="active site" description="Proton donor" evidence="1">
    <location>
        <position position="65"/>
    </location>
</feature>
<feature type="binding site" evidence="1">
    <location>
        <position position="14"/>
    </location>
    <ligand>
        <name>substrate</name>
    </ligand>
</feature>
<feature type="binding site" evidence="1">
    <location>
        <position position="36"/>
    </location>
    <ligand>
        <name>substrate</name>
    </ligand>
</feature>
<feature type="binding site" evidence="1">
    <location>
        <begin position="63"/>
        <end position="72"/>
    </location>
    <ligand>
        <name>substrate</name>
    </ligand>
</feature>
<feature type="binding site" evidence="1">
    <location>
        <position position="122"/>
    </location>
    <ligand>
        <name>substrate</name>
    </ligand>
</feature>
<feature type="binding site" evidence="1">
    <location>
        <position position="183"/>
    </location>
    <ligand>
        <name>substrate</name>
    </ligand>
</feature>
<feature type="binding site" evidence="1">
    <location>
        <position position="192"/>
    </location>
    <ligand>
        <name>substrate</name>
    </ligand>
</feature>
<feature type="binding site" evidence="1">
    <location>
        <position position="212"/>
    </location>
    <ligand>
        <name>substrate</name>
    </ligand>
</feature>
<feature type="binding site" evidence="1">
    <location>
        <position position="213"/>
    </location>
    <ligand>
        <name>substrate</name>
    </ligand>
</feature>
<gene>
    <name evidence="1" type="primary">pyrF</name>
    <name type="ordered locus">Csal_2155</name>
</gene>